<dbReference type="EC" id="3.1.-.-" evidence="1"/>
<dbReference type="EMBL" id="CP000750">
    <property type="protein sequence ID" value="ABS04850.1"/>
    <property type="molecule type" value="Genomic_DNA"/>
</dbReference>
<dbReference type="RefSeq" id="WP_012086891.1">
    <property type="nucleotide sequence ID" value="NC_009664.2"/>
</dbReference>
<dbReference type="SMR" id="A6WDG1"/>
<dbReference type="STRING" id="266940.Krad_3386"/>
<dbReference type="KEGG" id="kra:Krad_3386"/>
<dbReference type="eggNOG" id="COG0319">
    <property type="taxonomic scope" value="Bacteria"/>
</dbReference>
<dbReference type="HOGENOM" id="CLU_106710_3_2_11"/>
<dbReference type="OrthoDB" id="9807740at2"/>
<dbReference type="Proteomes" id="UP000001116">
    <property type="component" value="Chromosome"/>
</dbReference>
<dbReference type="GO" id="GO:0005737">
    <property type="term" value="C:cytoplasm"/>
    <property type="evidence" value="ECO:0007669"/>
    <property type="project" value="UniProtKB-SubCell"/>
</dbReference>
<dbReference type="GO" id="GO:0004222">
    <property type="term" value="F:metalloendopeptidase activity"/>
    <property type="evidence" value="ECO:0007669"/>
    <property type="project" value="InterPro"/>
</dbReference>
<dbReference type="GO" id="GO:0004521">
    <property type="term" value="F:RNA endonuclease activity"/>
    <property type="evidence" value="ECO:0007669"/>
    <property type="project" value="UniProtKB-UniRule"/>
</dbReference>
<dbReference type="GO" id="GO:0008270">
    <property type="term" value="F:zinc ion binding"/>
    <property type="evidence" value="ECO:0007669"/>
    <property type="project" value="UniProtKB-UniRule"/>
</dbReference>
<dbReference type="GO" id="GO:0006364">
    <property type="term" value="P:rRNA processing"/>
    <property type="evidence" value="ECO:0007669"/>
    <property type="project" value="UniProtKB-UniRule"/>
</dbReference>
<dbReference type="Gene3D" id="3.40.390.30">
    <property type="entry name" value="Metalloproteases ('zincins'), catalytic domain"/>
    <property type="match status" value="1"/>
</dbReference>
<dbReference type="HAMAP" id="MF_00009">
    <property type="entry name" value="Endoribonucl_YbeY"/>
    <property type="match status" value="1"/>
</dbReference>
<dbReference type="InterPro" id="IPR023091">
    <property type="entry name" value="MetalPrtase_cat_dom_sf_prd"/>
</dbReference>
<dbReference type="InterPro" id="IPR002036">
    <property type="entry name" value="YbeY"/>
</dbReference>
<dbReference type="InterPro" id="IPR020549">
    <property type="entry name" value="YbeY_CS"/>
</dbReference>
<dbReference type="NCBIfam" id="TIGR00043">
    <property type="entry name" value="rRNA maturation RNase YbeY"/>
    <property type="match status" value="1"/>
</dbReference>
<dbReference type="PANTHER" id="PTHR46986">
    <property type="entry name" value="ENDORIBONUCLEASE YBEY, CHLOROPLASTIC"/>
    <property type="match status" value="1"/>
</dbReference>
<dbReference type="PANTHER" id="PTHR46986:SF1">
    <property type="entry name" value="ENDORIBONUCLEASE YBEY, CHLOROPLASTIC"/>
    <property type="match status" value="1"/>
</dbReference>
<dbReference type="Pfam" id="PF02130">
    <property type="entry name" value="YbeY"/>
    <property type="match status" value="1"/>
</dbReference>
<dbReference type="SUPFAM" id="SSF55486">
    <property type="entry name" value="Metalloproteases ('zincins'), catalytic domain"/>
    <property type="match status" value="1"/>
</dbReference>
<dbReference type="PROSITE" id="PS01306">
    <property type="entry name" value="UPF0054"/>
    <property type="match status" value="1"/>
</dbReference>
<proteinExistence type="inferred from homology"/>
<comment type="function">
    <text evidence="1">Single strand-specific metallo-endoribonuclease involved in late-stage 70S ribosome quality control and in maturation of the 3' terminus of the 16S rRNA.</text>
</comment>
<comment type="cofactor">
    <cofactor evidence="1">
        <name>Zn(2+)</name>
        <dbReference type="ChEBI" id="CHEBI:29105"/>
    </cofactor>
    <text evidence="1">Binds 1 zinc ion.</text>
</comment>
<comment type="subcellular location">
    <subcellularLocation>
        <location evidence="1">Cytoplasm</location>
    </subcellularLocation>
</comment>
<comment type="similarity">
    <text evidence="1">Belongs to the endoribonuclease YbeY family.</text>
</comment>
<protein>
    <recommendedName>
        <fullName evidence="1">Endoribonuclease YbeY</fullName>
        <ecNumber evidence="1">3.1.-.-</ecNumber>
    </recommendedName>
</protein>
<keyword id="KW-0963">Cytoplasm</keyword>
<keyword id="KW-0255">Endonuclease</keyword>
<keyword id="KW-0378">Hydrolase</keyword>
<keyword id="KW-0479">Metal-binding</keyword>
<keyword id="KW-0540">Nuclease</keyword>
<keyword id="KW-1185">Reference proteome</keyword>
<keyword id="KW-0690">Ribosome biogenesis</keyword>
<keyword id="KW-0698">rRNA processing</keyword>
<keyword id="KW-0862">Zinc</keyword>
<accession>A6WDG1</accession>
<sequence>MSIEVVDESSFAQGRGVDTVEVSHLARYVLDEMRVHPLAELSVLMVDVEAMARLHVQWMDEPGPTDVMSFPMDQLRPGREGRTSEPGLLGDVVVCPQVAAEQAKASGHATADEVLLLVAHGILHLLGYDHAEPDEEREMFTLQRRLVLGFLARIGRPGDPTPTVGHRALPAGD</sequence>
<evidence type="ECO:0000255" key="1">
    <source>
        <dbReference type="HAMAP-Rule" id="MF_00009"/>
    </source>
</evidence>
<reference key="1">
    <citation type="journal article" date="2008" name="PLoS ONE">
        <title>Survival in nuclear waste, extreme resistance, and potential applications gleaned from the genome sequence of Kineococcus radiotolerans SRS30216.</title>
        <authorList>
            <person name="Bagwell C.E."/>
            <person name="Bhat S."/>
            <person name="Hawkins G.M."/>
            <person name="Smith B.W."/>
            <person name="Biswas T."/>
            <person name="Hoover T.R."/>
            <person name="Saunders E."/>
            <person name="Han C.S."/>
            <person name="Tsodikov O.V."/>
            <person name="Shimkets L.J."/>
        </authorList>
    </citation>
    <scope>NUCLEOTIDE SEQUENCE [LARGE SCALE GENOMIC DNA]</scope>
    <source>
        <strain>ATCC BAA-149 / DSM 14245 / SRS30216</strain>
    </source>
</reference>
<name>YBEY_KINRD</name>
<organism>
    <name type="scientific">Kineococcus radiotolerans (strain ATCC BAA-149 / DSM 14245 / SRS30216)</name>
    <dbReference type="NCBI Taxonomy" id="266940"/>
    <lineage>
        <taxon>Bacteria</taxon>
        <taxon>Bacillati</taxon>
        <taxon>Actinomycetota</taxon>
        <taxon>Actinomycetes</taxon>
        <taxon>Kineosporiales</taxon>
        <taxon>Kineosporiaceae</taxon>
        <taxon>Kineococcus</taxon>
    </lineage>
</organism>
<gene>
    <name evidence="1" type="primary">ybeY</name>
    <name type="ordered locus">Krad_3386</name>
</gene>
<feature type="chain" id="PRO_1000073907" description="Endoribonuclease YbeY">
    <location>
        <begin position="1"/>
        <end position="173"/>
    </location>
</feature>
<feature type="binding site" evidence="1">
    <location>
        <position position="120"/>
    </location>
    <ligand>
        <name>Zn(2+)</name>
        <dbReference type="ChEBI" id="CHEBI:29105"/>
        <note>catalytic</note>
    </ligand>
</feature>
<feature type="binding site" evidence="1">
    <location>
        <position position="124"/>
    </location>
    <ligand>
        <name>Zn(2+)</name>
        <dbReference type="ChEBI" id="CHEBI:29105"/>
        <note>catalytic</note>
    </ligand>
</feature>
<feature type="binding site" evidence="1">
    <location>
        <position position="130"/>
    </location>
    <ligand>
        <name>Zn(2+)</name>
        <dbReference type="ChEBI" id="CHEBI:29105"/>
        <note>catalytic</note>
    </ligand>
</feature>